<feature type="chain" id="PRO_0000333325" description="Ribosome biogenesis protein ALB1">
    <location>
        <begin position="1"/>
        <end position="160"/>
    </location>
</feature>
<feature type="region of interest" description="Disordered" evidence="2">
    <location>
        <begin position="1"/>
        <end position="58"/>
    </location>
</feature>
<dbReference type="EMBL" id="AE016819">
    <property type="protein sequence ID" value="AAS53165.1"/>
    <property type="molecule type" value="Genomic_DNA"/>
</dbReference>
<dbReference type="RefSeq" id="NP_985341.1">
    <property type="nucleotide sequence ID" value="NM_210695.1"/>
</dbReference>
<dbReference type="SMR" id="Q755M3"/>
<dbReference type="FunCoup" id="Q755M3">
    <property type="interactions" value="253"/>
</dbReference>
<dbReference type="STRING" id="284811.Q755M3"/>
<dbReference type="EnsemblFungi" id="AAS53165">
    <property type="protein sequence ID" value="AAS53165"/>
    <property type="gene ID" value="AGOS_AFL209W"/>
</dbReference>
<dbReference type="GeneID" id="4621565"/>
<dbReference type="KEGG" id="ago:AGOS_AFL209W"/>
<dbReference type="eggNOG" id="ENOG502S14D">
    <property type="taxonomic scope" value="Eukaryota"/>
</dbReference>
<dbReference type="HOGENOM" id="CLU_103824_0_0_1"/>
<dbReference type="InParanoid" id="Q755M3"/>
<dbReference type="OMA" id="HHKVHSL"/>
<dbReference type="OrthoDB" id="4086742at2759"/>
<dbReference type="Proteomes" id="UP000000591">
    <property type="component" value="Chromosome VI"/>
</dbReference>
<dbReference type="GO" id="GO:0005737">
    <property type="term" value="C:cytoplasm"/>
    <property type="evidence" value="ECO:0007669"/>
    <property type="project" value="UniProtKB-SubCell"/>
</dbReference>
<dbReference type="GO" id="GO:0005634">
    <property type="term" value="C:nucleus"/>
    <property type="evidence" value="ECO:0007669"/>
    <property type="project" value="UniProtKB-SubCell"/>
</dbReference>
<dbReference type="GO" id="GO:0042273">
    <property type="term" value="P:ribosomal large subunit biogenesis"/>
    <property type="evidence" value="ECO:0007669"/>
    <property type="project" value="EnsemblFungi"/>
</dbReference>
<dbReference type="InterPro" id="IPR022784">
    <property type="entry name" value="Ribosome_bgen_Alb1"/>
</dbReference>
<dbReference type="Pfam" id="PF09135">
    <property type="entry name" value="Alb1"/>
    <property type="match status" value="1"/>
</dbReference>
<proteinExistence type="inferred from homology"/>
<evidence type="ECO:0000250" key="1"/>
<evidence type="ECO:0000256" key="2">
    <source>
        <dbReference type="SAM" id="MobiDB-lite"/>
    </source>
</evidence>
<evidence type="ECO:0000305" key="3"/>
<organism>
    <name type="scientific">Eremothecium gossypii (strain ATCC 10895 / CBS 109.51 / FGSC 9923 / NRRL Y-1056)</name>
    <name type="common">Yeast</name>
    <name type="synonym">Ashbya gossypii</name>
    <dbReference type="NCBI Taxonomy" id="284811"/>
    <lineage>
        <taxon>Eukaryota</taxon>
        <taxon>Fungi</taxon>
        <taxon>Dikarya</taxon>
        <taxon>Ascomycota</taxon>
        <taxon>Saccharomycotina</taxon>
        <taxon>Saccharomycetes</taxon>
        <taxon>Saccharomycetales</taxon>
        <taxon>Saccharomycetaceae</taxon>
        <taxon>Eremothecium</taxon>
    </lineage>
</organism>
<protein>
    <recommendedName>
        <fullName>Ribosome biogenesis protein ALB1</fullName>
    </recommendedName>
</protein>
<reference key="1">
    <citation type="journal article" date="2004" name="Science">
        <title>The Ashbya gossypii genome as a tool for mapping the ancient Saccharomyces cerevisiae genome.</title>
        <authorList>
            <person name="Dietrich F.S."/>
            <person name="Voegeli S."/>
            <person name="Brachat S."/>
            <person name="Lerch A."/>
            <person name="Gates K."/>
            <person name="Steiner S."/>
            <person name="Mohr C."/>
            <person name="Poehlmann R."/>
            <person name="Luedi P."/>
            <person name="Choi S."/>
            <person name="Wing R.A."/>
            <person name="Flavier A."/>
            <person name="Gaffney T.D."/>
            <person name="Philippsen P."/>
        </authorList>
    </citation>
    <scope>NUCLEOTIDE SEQUENCE [LARGE SCALE GENOMIC DNA]</scope>
    <source>
        <strain>ATCC 10895 / CBS 109.51 / FGSC 9923 / NRRL Y-1056</strain>
    </source>
</reference>
<reference key="2">
    <citation type="journal article" date="2013" name="G3 (Bethesda)">
        <title>Genomes of Ashbya fungi isolated from insects reveal four mating-type loci, numerous translocations, lack of transposons, and distinct gene duplications.</title>
        <authorList>
            <person name="Dietrich F.S."/>
            <person name="Voegeli S."/>
            <person name="Kuo S."/>
            <person name="Philippsen P."/>
        </authorList>
    </citation>
    <scope>GENOME REANNOTATION</scope>
    <source>
        <strain>ATCC 10895 / CBS 109.51 / FGSC 9923 / NRRL Y-1056</strain>
    </source>
</reference>
<gene>
    <name type="primary">ALB1</name>
    <name type="ordered locus">AFL209W</name>
</gene>
<keyword id="KW-0963">Cytoplasm</keyword>
<keyword id="KW-0539">Nucleus</keyword>
<keyword id="KW-1185">Reference proteome</keyword>
<keyword id="KW-0690">Ribosome biogenesis</keyword>
<keyword id="KW-0813">Transport</keyword>
<comment type="function">
    <text evidence="1">Involved in proper assembly of pre-ribosomal particles during the biogenesis of the 60S ribosomal subunit. Accompanies the pre-60S particles to the cytoplasm (By similarity).</text>
</comment>
<comment type="subunit">
    <text evidence="1">Component of the nucleoplasmic and cytoplasmic pre-60S ribosomal particles.</text>
</comment>
<comment type="subcellular location">
    <subcellularLocation>
        <location evidence="1">Cytoplasm</location>
    </subcellularLocation>
    <subcellularLocation>
        <location evidence="1">Nucleus</location>
    </subcellularLocation>
</comment>
<comment type="similarity">
    <text evidence="3">Belongs to the ALB1 family.</text>
</comment>
<accession>Q755M3</accession>
<sequence length="160" mass="17720">MPSKNSINRPKQKLNLQHRVQKNAAKRSARERAGLLAPPRSSDQSQSGRAKSIPLDLFRGERVDQGPITTKTLSKKRAKKIERNLRYVEQRKLLVDVQAARESGMDIDVETAVSTKAKTQQTGPLQKVKESIWSALEDVAAQEMIVQTGAGTTLGGQFFP</sequence>
<name>ALB1_EREGS</name>